<sequence length="238" mass="25802">MLRQGRGLSDLRPITMTRHFIKHPEGAVLVEFGDTRVICTASVEESVPPFLRGKGTGWVTAEYSMLPRATHTRSSREAAKGKQSGRTLEIQRLIGRSLRAVTDMTKLGERTIYLDCDVIQADGGTRTASITGAYVALVDAVSALLVQGKITGNPLKEAVAAVSVGIVDGQAVLDLDYQEDSSAEVDMNFVMTSSGRFVEVQGTAEAEPFTLEQMDAMRSLAMTGINQLFTYQQEALAR</sequence>
<proteinExistence type="inferred from homology"/>
<feature type="chain" id="PRO_1000129346" description="Ribonuclease PH">
    <location>
        <begin position="1"/>
        <end position="238"/>
    </location>
</feature>
<feature type="binding site" evidence="1">
    <location>
        <position position="86"/>
    </location>
    <ligand>
        <name>phosphate</name>
        <dbReference type="ChEBI" id="CHEBI:43474"/>
        <note>substrate</note>
    </ligand>
</feature>
<feature type="binding site" evidence="1">
    <location>
        <begin position="124"/>
        <end position="126"/>
    </location>
    <ligand>
        <name>phosphate</name>
        <dbReference type="ChEBI" id="CHEBI:43474"/>
        <note>substrate</note>
    </ligand>
</feature>
<keyword id="KW-0548">Nucleotidyltransferase</keyword>
<keyword id="KW-1185">Reference proteome</keyword>
<keyword id="KW-0694">RNA-binding</keyword>
<keyword id="KW-0698">rRNA processing</keyword>
<keyword id="KW-0808">Transferase</keyword>
<keyword id="KW-0819">tRNA processing</keyword>
<keyword id="KW-0820">tRNA-binding</keyword>
<reference key="1">
    <citation type="submission" date="2008-05" db="EMBL/GenBank/DDBJ databases">
        <title>Complete sequence of chromosome of Geobacter lovleyi SZ.</title>
        <authorList>
            <consortium name="US DOE Joint Genome Institute"/>
            <person name="Lucas S."/>
            <person name="Copeland A."/>
            <person name="Lapidus A."/>
            <person name="Glavina del Rio T."/>
            <person name="Dalin E."/>
            <person name="Tice H."/>
            <person name="Bruce D."/>
            <person name="Goodwin L."/>
            <person name="Pitluck S."/>
            <person name="Chertkov O."/>
            <person name="Meincke L."/>
            <person name="Brettin T."/>
            <person name="Detter J.C."/>
            <person name="Han C."/>
            <person name="Tapia R."/>
            <person name="Kuske C.R."/>
            <person name="Schmutz J."/>
            <person name="Larimer F."/>
            <person name="Land M."/>
            <person name="Hauser L."/>
            <person name="Kyrpides N."/>
            <person name="Mikhailova N."/>
            <person name="Sung Y."/>
            <person name="Fletcher K.E."/>
            <person name="Ritalahti K.M."/>
            <person name="Loeffler F.E."/>
            <person name="Richardson P."/>
        </authorList>
    </citation>
    <scope>NUCLEOTIDE SEQUENCE [LARGE SCALE GENOMIC DNA]</scope>
    <source>
        <strain>ATCC BAA-1151 / DSM 17278 / SZ</strain>
    </source>
</reference>
<organism>
    <name type="scientific">Trichlorobacter lovleyi (strain ATCC BAA-1151 / DSM 17278 / SZ)</name>
    <name type="common">Geobacter lovleyi</name>
    <dbReference type="NCBI Taxonomy" id="398767"/>
    <lineage>
        <taxon>Bacteria</taxon>
        <taxon>Pseudomonadati</taxon>
        <taxon>Thermodesulfobacteriota</taxon>
        <taxon>Desulfuromonadia</taxon>
        <taxon>Geobacterales</taxon>
        <taxon>Geobacteraceae</taxon>
        <taxon>Trichlorobacter</taxon>
    </lineage>
</organism>
<dbReference type="EC" id="2.7.7.56" evidence="1"/>
<dbReference type="EMBL" id="CP001089">
    <property type="protein sequence ID" value="ACD95751.1"/>
    <property type="molecule type" value="Genomic_DNA"/>
</dbReference>
<dbReference type="RefSeq" id="WP_012470090.1">
    <property type="nucleotide sequence ID" value="NC_010814.1"/>
</dbReference>
<dbReference type="SMR" id="B3E3D2"/>
<dbReference type="STRING" id="398767.Glov_2035"/>
<dbReference type="KEGG" id="glo:Glov_2035"/>
<dbReference type="eggNOG" id="COG0689">
    <property type="taxonomic scope" value="Bacteria"/>
</dbReference>
<dbReference type="HOGENOM" id="CLU_050858_0_0_7"/>
<dbReference type="OrthoDB" id="9802265at2"/>
<dbReference type="Proteomes" id="UP000002420">
    <property type="component" value="Chromosome"/>
</dbReference>
<dbReference type="GO" id="GO:0000175">
    <property type="term" value="F:3'-5'-RNA exonuclease activity"/>
    <property type="evidence" value="ECO:0007669"/>
    <property type="project" value="UniProtKB-UniRule"/>
</dbReference>
<dbReference type="GO" id="GO:0000049">
    <property type="term" value="F:tRNA binding"/>
    <property type="evidence" value="ECO:0007669"/>
    <property type="project" value="UniProtKB-UniRule"/>
</dbReference>
<dbReference type="GO" id="GO:0009022">
    <property type="term" value="F:tRNA nucleotidyltransferase activity"/>
    <property type="evidence" value="ECO:0007669"/>
    <property type="project" value="UniProtKB-UniRule"/>
</dbReference>
<dbReference type="GO" id="GO:0016075">
    <property type="term" value="P:rRNA catabolic process"/>
    <property type="evidence" value="ECO:0007669"/>
    <property type="project" value="UniProtKB-UniRule"/>
</dbReference>
<dbReference type="GO" id="GO:0006364">
    <property type="term" value="P:rRNA processing"/>
    <property type="evidence" value="ECO:0007669"/>
    <property type="project" value="UniProtKB-KW"/>
</dbReference>
<dbReference type="GO" id="GO:0008033">
    <property type="term" value="P:tRNA processing"/>
    <property type="evidence" value="ECO:0007669"/>
    <property type="project" value="UniProtKB-UniRule"/>
</dbReference>
<dbReference type="CDD" id="cd11362">
    <property type="entry name" value="RNase_PH_bact"/>
    <property type="match status" value="1"/>
</dbReference>
<dbReference type="FunFam" id="3.30.230.70:FF:000003">
    <property type="entry name" value="Ribonuclease PH"/>
    <property type="match status" value="1"/>
</dbReference>
<dbReference type="Gene3D" id="3.30.230.70">
    <property type="entry name" value="GHMP Kinase, N-terminal domain"/>
    <property type="match status" value="1"/>
</dbReference>
<dbReference type="HAMAP" id="MF_00564">
    <property type="entry name" value="RNase_PH"/>
    <property type="match status" value="1"/>
</dbReference>
<dbReference type="InterPro" id="IPR001247">
    <property type="entry name" value="ExoRNase_PH_dom1"/>
</dbReference>
<dbReference type="InterPro" id="IPR015847">
    <property type="entry name" value="ExoRNase_PH_dom2"/>
</dbReference>
<dbReference type="InterPro" id="IPR036345">
    <property type="entry name" value="ExoRNase_PH_dom2_sf"/>
</dbReference>
<dbReference type="InterPro" id="IPR027408">
    <property type="entry name" value="PNPase/RNase_PH_dom_sf"/>
</dbReference>
<dbReference type="InterPro" id="IPR020568">
    <property type="entry name" value="Ribosomal_Su5_D2-typ_SF"/>
</dbReference>
<dbReference type="InterPro" id="IPR050080">
    <property type="entry name" value="RNase_PH"/>
</dbReference>
<dbReference type="InterPro" id="IPR002381">
    <property type="entry name" value="RNase_PH_bac-type"/>
</dbReference>
<dbReference type="InterPro" id="IPR018336">
    <property type="entry name" value="RNase_PH_CS"/>
</dbReference>
<dbReference type="NCBIfam" id="TIGR01966">
    <property type="entry name" value="RNasePH"/>
    <property type="match status" value="1"/>
</dbReference>
<dbReference type="PANTHER" id="PTHR11953">
    <property type="entry name" value="EXOSOME COMPLEX COMPONENT"/>
    <property type="match status" value="1"/>
</dbReference>
<dbReference type="PANTHER" id="PTHR11953:SF0">
    <property type="entry name" value="EXOSOME COMPLEX COMPONENT RRP41"/>
    <property type="match status" value="1"/>
</dbReference>
<dbReference type="Pfam" id="PF01138">
    <property type="entry name" value="RNase_PH"/>
    <property type="match status" value="1"/>
</dbReference>
<dbReference type="Pfam" id="PF03725">
    <property type="entry name" value="RNase_PH_C"/>
    <property type="match status" value="1"/>
</dbReference>
<dbReference type="SUPFAM" id="SSF55666">
    <property type="entry name" value="Ribonuclease PH domain 2-like"/>
    <property type="match status" value="1"/>
</dbReference>
<dbReference type="SUPFAM" id="SSF54211">
    <property type="entry name" value="Ribosomal protein S5 domain 2-like"/>
    <property type="match status" value="1"/>
</dbReference>
<dbReference type="PROSITE" id="PS01277">
    <property type="entry name" value="RIBONUCLEASE_PH"/>
    <property type="match status" value="1"/>
</dbReference>
<name>RNPH_TRIL1</name>
<accession>B3E3D2</accession>
<evidence type="ECO:0000255" key="1">
    <source>
        <dbReference type="HAMAP-Rule" id="MF_00564"/>
    </source>
</evidence>
<gene>
    <name evidence="1" type="primary">rph</name>
    <name type="ordered locus">Glov_2035</name>
</gene>
<comment type="function">
    <text evidence="1">Phosphorolytic 3'-5' exoribonuclease that plays an important role in tRNA 3'-end maturation. Removes nucleotide residues following the 3'-CCA terminus of tRNAs; can also add nucleotides to the ends of RNA molecules by using nucleoside diphosphates as substrates, but this may not be physiologically important. Probably plays a role in initiation of 16S rRNA degradation (leading to ribosome degradation) during starvation.</text>
</comment>
<comment type="catalytic activity">
    <reaction evidence="1">
        <text>tRNA(n+1) + phosphate = tRNA(n) + a ribonucleoside 5'-diphosphate</text>
        <dbReference type="Rhea" id="RHEA:10628"/>
        <dbReference type="Rhea" id="RHEA-COMP:17343"/>
        <dbReference type="Rhea" id="RHEA-COMP:17344"/>
        <dbReference type="ChEBI" id="CHEBI:43474"/>
        <dbReference type="ChEBI" id="CHEBI:57930"/>
        <dbReference type="ChEBI" id="CHEBI:173114"/>
        <dbReference type="EC" id="2.7.7.56"/>
    </reaction>
</comment>
<comment type="subunit">
    <text evidence="1">Homohexameric ring arranged as a trimer of dimers.</text>
</comment>
<comment type="similarity">
    <text evidence="1">Belongs to the RNase PH family.</text>
</comment>
<protein>
    <recommendedName>
        <fullName evidence="1">Ribonuclease PH</fullName>
        <shortName evidence="1">RNase PH</shortName>
        <ecNumber evidence="1">2.7.7.56</ecNumber>
    </recommendedName>
    <alternativeName>
        <fullName evidence="1">tRNA nucleotidyltransferase</fullName>
    </alternativeName>
</protein>